<organism>
    <name type="scientific">Arabidopsis thaliana</name>
    <name type="common">Mouse-ear cress</name>
    <dbReference type="NCBI Taxonomy" id="3702"/>
    <lineage>
        <taxon>Eukaryota</taxon>
        <taxon>Viridiplantae</taxon>
        <taxon>Streptophyta</taxon>
        <taxon>Embryophyta</taxon>
        <taxon>Tracheophyta</taxon>
        <taxon>Spermatophyta</taxon>
        <taxon>Magnoliopsida</taxon>
        <taxon>eudicotyledons</taxon>
        <taxon>Gunneridae</taxon>
        <taxon>Pentapetalae</taxon>
        <taxon>rosids</taxon>
        <taxon>malvids</taxon>
        <taxon>Brassicales</taxon>
        <taxon>Brassicaceae</taxon>
        <taxon>Camelineae</taxon>
        <taxon>Arabidopsis</taxon>
    </lineage>
</organism>
<comment type="function">
    <text evidence="3 4">Functions as a response regulator involved in His-to-Asp phosphorelay signal transduction system. Phosphorylation of the Asp residue in the receiver domain activates the ability of the protein to promote the transcription of target genes. Type-A response regulators seem to act as negative regulators of the cytokinin signaling.</text>
</comment>
<comment type="interaction">
    <interactant intactId="EBI-1100883">
        <id>Q9SB04</id>
    </interactant>
    <interactant intactId="EBI-1100673">
        <id>Q9ZNV9</id>
        <label>AHP1</label>
    </interactant>
    <organismsDiffer>false</organismsDiffer>
    <experiments>2</experiments>
</comment>
<comment type="interaction">
    <interactant intactId="EBI-1100883">
        <id>Q9SB04</id>
    </interactant>
    <interactant intactId="EBI-1100711">
        <id>Q9SAZ5</id>
        <label>AHP3</label>
    </interactant>
    <organismsDiffer>false</organismsDiffer>
    <experiments>3</experiments>
</comment>
<comment type="interaction">
    <interactant intactId="EBI-1100883">
        <id>Q9SB04</id>
    </interactant>
    <interactant intactId="EBI-1100725">
        <id>Q67XQ1</id>
        <label>At1g03430</label>
    </interactant>
    <organismsDiffer>false</organismsDiffer>
    <experiments>3</experiments>
</comment>
<comment type="subcellular location">
    <subcellularLocation>
        <location evidence="8">Nucleus</location>
    </subcellularLocation>
</comment>
<comment type="tissue specificity">
    <text evidence="2 4 5 6">Predominantly expressed in roots and shoot apical meristems.</text>
</comment>
<comment type="induction">
    <text evidence="2 5 6 7">By low temperature, dehydration, cytokinins (BA and zeatin), nitrate and high salinity.</text>
</comment>
<comment type="PTM">
    <text>Two-component system major event consists of a His-to-Asp phosphorelay between a sensor histidine kinase (HK) and a response regulator (RR). In plants, the His-to-Asp phosphorelay involves an additional intermediate named Histidine-containing phosphotransfer protein (HPt). This multistep phosphorelay consists of a His-Asp-His-Asp sequential transfer of a phosphate group between first a His and an Asp of the HK protein, followed by the transfer to a conserved His of the HPt protein and finally the transfer to an Asp in the receiver domain of the RR protein.</text>
</comment>
<comment type="similarity">
    <text evidence="8">Belongs to the ARR family. Type-A subfamily.</text>
</comment>
<keyword id="KW-0932">Cytokinin signaling pathway</keyword>
<keyword id="KW-0539">Nucleus</keyword>
<keyword id="KW-0597">Phosphoprotein</keyword>
<keyword id="KW-1185">Reference proteome</keyword>
<keyword id="KW-0804">Transcription</keyword>
<keyword id="KW-0805">Transcription regulation</keyword>
<keyword id="KW-0902">Two-component regulatory system</keyword>
<evidence type="ECO:0000255" key="1">
    <source>
        <dbReference type="PROSITE-ProRule" id="PRU00169"/>
    </source>
</evidence>
<evidence type="ECO:0000269" key="2">
    <source>
    </source>
</evidence>
<evidence type="ECO:0000269" key="3">
    <source>
    </source>
</evidence>
<evidence type="ECO:0000269" key="4">
    <source>
    </source>
</evidence>
<evidence type="ECO:0000269" key="5">
    <source>
    </source>
</evidence>
<evidence type="ECO:0000269" key="6">
    <source>
    </source>
</evidence>
<evidence type="ECO:0000269" key="7">
    <source>
    </source>
</evidence>
<evidence type="ECO:0000305" key="8"/>
<feature type="chain" id="PRO_0000081426" description="Two-component response regulator ARR5">
    <location>
        <begin position="1"/>
        <end position="184"/>
    </location>
</feature>
<feature type="domain" description="Response regulatory" evidence="1">
    <location>
        <begin position="26"/>
        <end position="154"/>
    </location>
</feature>
<feature type="modified residue" description="4-aspartylphosphate" evidence="1">
    <location>
        <position position="87"/>
    </location>
</feature>
<feature type="sequence conflict" description="In Ref. 3; AAC26635." evidence="8" ref="3">
    <original>R</original>
    <variation>G</variation>
    <location>
        <position position="159"/>
    </location>
</feature>
<feature type="sequence conflict" description="In Ref. 1; BAA34727." evidence="8" ref="1">
    <original>N</original>
    <variation>D</variation>
    <location>
        <position position="163"/>
    </location>
</feature>
<gene>
    <name type="primary">ARR5</name>
    <name type="synonym">ATRR2</name>
    <name type="synonym">IBC6</name>
    <name type="ordered locus">At3g48100</name>
    <name type="ORF">T17F15.30</name>
</gene>
<dbReference type="EMBL" id="AB008488">
    <property type="protein sequence ID" value="BAA34727.1"/>
    <property type="molecule type" value="mRNA"/>
</dbReference>
<dbReference type="EMBL" id="AB010916">
    <property type="protein sequence ID" value="BAA31144.1"/>
    <property type="molecule type" value="mRNA"/>
</dbReference>
<dbReference type="EMBL" id="AF057281">
    <property type="protein sequence ID" value="AAC26635.1"/>
    <property type="molecule type" value="mRNA"/>
</dbReference>
<dbReference type="EMBL" id="AL049658">
    <property type="protein sequence ID" value="CAB41129.1"/>
    <property type="molecule type" value="Genomic_DNA"/>
</dbReference>
<dbReference type="EMBL" id="CP002686">
    <property type="protein sequence ID" value="AEE78368.1"/>
    <property type="molecule type" value="Genomic_DNA"/>
</dbReference>
<dbReference type="EMBL" id="AY072390">
    <property type="protein sequence ID" value="AAL62382.1"/>
    <property type="molecule type" value="mRNA"/>
</dbReference>
<dbReference type="EMBL" id="AY114698">
    <property type="protein sequence ID" value="AAM48017.1"/>
    <property type="molecule type" value="mRNA"/>
</dbReference>
<dbReference type="PIR" id="T06673">
    <property type="entry name" value="T06673"/>
</dbReference>
<dbReference type="PIR" id="T50855">
    <property type="entry name" value="T50855"/>
</dbReference>
<dbReference type="PIR" id="T50856">
    <property type="entry name" value="T50856"/>
</dbReference>
<dbReference type="SMR" id="Q9SB04"/>
<dbReference type="BioGRID" id="9284">
    <property type="interactions" value="28"/>
</dbReference>
<dbReference type="FunCoup" id="Q9SB04">
    <property type="interactions" value="295"/>
</dbReference>
<dbReference type="IntAct" id="Q9SB04">
    <property type="interactions" value="28"/>
</dbReference>
<dbReference type="STRING" id="3702.Q9SB04"/>
<dbReference type="iPTMnet" id="Q9SB04"/>
<dbReference type="PaxDb" id="3702-AT3G48100.1"/>
<dbReference type="ProteomicsDB" id="246901"/>
<dbReference type="EnsemblPlants" id="AT3G48100.1">
    <property type="protein sequence ID" value="AT3G48100.1"/>
    <property type="gene ID" value="AT3G48100"/>
</dbReference>
<dbReference type="GeneID" id="823965"/>
<dbReference type="Gramene" id="AT3G48100.1">
    <property type="protein sequence ID" value="AT3G48100.1"/>
    <property type="gene ID" value="AT3G48100"/>
</dbReference>
<dbReference type="KEGG" id="ath:AT3G48100"/>
<dbReference type="Araport" id="AT3G48100"/>
<dbReference type="TAIR" id="AT3G48100">
    <property type="gene designation" value="RR5"/>
</dbReference>
<dbReference type="eggNOG" id="KOG1601">
    <property type="taxonomic scope" value="Eukaryota"/>
</dbReference>
<dbReference type="HOGENOM" id="CLU_000445_69_5_1"/>
<dbReference type="InParanoid" id="Q9SB04"/>
<dbReference type="OMA" id="ETINACC"/>
<dbReference type="PhylomeDB" id="Q9SB04"/>
<dbReference type="PRO" id="PR:Q9SB04"/>
<dbReference type="Proteomes" id="UP000006548">
    <property type="component" value="Chromosome 3"/>
</dbReference>
<dbReference type="ExpressionAtlas" id="Q9SB04">
    <property type="expression patterns" value="baseline and differential"/>
</dbReference>
<dbReference type="GO" id="GO:0005737">
    <property type="term" value="C:cytoplasm"/>
    <property type="evidence" value="ECO:0000314"/>
    <property type="project" value="TAIR"/>
</dbReference>
<dbReference type="GO" id="GO:0005634">
    <property type="term" value="C:nucleus"/>
    <property type="evidence" value="ECO:0000314"/>
    <property type="project" value="TAIR"/>
</dbReference>
<dbReference type="GO" id="GO:0000156">
    <property type="term" value="F:phosphorelay response regulator activity"/>
    <property type="evidence" value="ECO:0000315"/>
    <property type="project" value="TAIR"/>
</dbReference>
<dbReference type="GO" id="GO:0007623">
    <property type="term" value="P:circadian rhythm"/>
    <property type="evidence" value="ECO:0000315"/>
    <property type="project" value="TAIR"/>
</dbReference>
<dbReference type="GO" id="GO:0009736">
    <property type="term" value="P:cytokinin-activated signaling pathway"/>
    <property type="evidence" value="ECO:0000315"/>
    <property type="project" value="TAIR"/>
</dbReference>
<dbReference type="GO" id="GO:0006355">
    <property type="term" value="P:regulation of DNA-templated transcription"/>
    <property type="evidence" value="ECO:0000304"/>
    <property type="project" value="TAIR"/>
</dbReference>
<dbReference type="GO" id="GO:0009735">
    <property type="term" value="P:response to cytokinin"/>
    <property type="evidence" value="ECO:0000270"/>
    <property type="project" value="TAIR"/>
</dbReference>
<dbReference type="GO" id="GO:0010114">
    <property type="term" value="P:response to red light"/>
    <property type="evidence" value="ECO:0000315"/>
    <property type="project" value="TAIR"/>
</dbReference>
<dbReference type="CDD" id="cd17581">
    <property type="entry name" value="REC_typeA_ARR"/>
    <property type="match status" value="1"/>
</dbReference>
<dbReference type="FunFam" id="3.40.50.2300:FF:000184">
    <property type="entry name" value="Response regulator 3"/>
    <property type="match status" value="1"/>
</dbReference>
<dbReference type="Gene3D" id="3.40.50.2300">
    <property type="match status" value="1"/>
</dbReference>
<dbReference type="InterPro" id="IPR045279">
    <property type="entry name" value="ARR-like"/>
</dbReference>
<dbReference type="InterPro" id="IPR011006">
    <property type="entry name" value="CheY-like_superfamily"/>
</dbReference>
<dbReference type="InterPro" id="IPR001789">
    <property type="entry name" value="Sig_transdc_resp-reg_receiver"/>
</dbReference>
<dbReference type="PANTHER" id="PTHR43874">
    <property type="entry name" value="TWO-COMPONENT RESPONSE REGULATOR"/>
    <property type="match status" value="1"/>
</dbReference>
<dbReference type="PANTHER" id="PTHR43874:SF94">
    <property type="entry name" value="TWO-COMPONENT RESPONSE REGULATOR ARR5"/>
    <property type="match status" value="1"/>
</dbReference>
<dbReference type="Pfam" id="PF00072">
    <property type="entry name" value="Response_reg"/>
    <property type="match status" value="1"/>
</dbReference>
<dbReference type="SMART" id="SM00448">
    <property type="entry name" value="REC"/>
    <property type="match status" value="1"/>
</dbReference>
<dbReference type="SUPFAM" id="SSF52172">
    <property type="entry name" value="CheY-like"/>
    <property type="match status" value="1"/>
</dbReference>
<dbReference type="PROSITE" id="PS50110">
    <property type="entry name" value="RESPONSE_REGULATORY"/>
    <property type="match status" value="1"/>
</dbReference>
<accession>Q9SB04</accession>
<accession>O80364</accession>
<accession>Q9SBH9</accession>
<protein>
    <recommendedName>
        <fullName>Two-component response regulator ARR5</fullName>
    </recommendedName>
    <alternativeName>
        <fullName>Response reactor 2</fullName>
    </alternativeName>
</protein>
<sequence length="184" mass="20879">MAEVLRPEMLDISNDTSSLASPKLLHVLAVDDSMVDRKFIERLLRVSSCKVTVVDSATRALQYLGLDGENNSSVGFEDLKINLIMTDYSMPGMTGYELLKKIKESSAFREIPVVIMSSENILPRIDRCLEEGAEDFLLKPVKLADVKRLRDSLMKAEERAFKNIMHKRELEANDIYSQLKRAKI</sequence>
<proteinExistence type="evidence at protein level"/>
<reference key="1">
    <citation type="journal article" date="1998" name="Proc. Natl. Acad. Sci. U.S.A.">
        <title>Response regulators implicated in His-to-Asp phosphotransfer signaling in Arabidopsis.</title>
        <authorList>
            <person name="Imamura A."/>
            <person name="Hanaki N."/>
            <person name="Umeda H."/>
            <person name="Nakamura A."/>
            <person name="Suzuki T."/>
            <person name="Ueguchi C."/>
            <person name="Mizuno T."/>
        </authorList>
    </citation>
    <scope>NUCLEOTIDE SEQUENCE [MRNA]</scope>
    <scope>FUNCTION</scope>
    <scope>TISSUE SPECIFICITY</scope>
    <source>
        <strain>cv. Columbia</strain>
    </source>
</reference>
<reference key="2">
    <citation type="journal article" date="1998" name="FEBS Lett.">
        <title>Stress-responsive expression of genes for two-component response regulator-like proteins in Arabidopsis thaliana.</title>
        <authorList>
            <person name="Urao T."/>
            <person name="Yakubov B."/>
            <person name="Yamaguchi-Shinozaki K."/>
            <person name="Shinozaki K."/>
        </authorList>
    </citation>
    <scope>NUCLEOTIDE SEQUENCE [MRNA]</scope>
    <scope>TISSUE SPECIFICITY</scope>
    <scope>INDUCTION</scope>
    <source>
        <strain>cv. Columbia</strain>
    </source>
</reference>
<reference key="3">
    <citation type="journal article" date="1998" name="Plant Cell">
        <title>Two genes with similarity to bacterial response regulators are rapidly and specifically induced by cytokinin in Arabidopsis.</title>
        <authorList>
            <person name="Brandstatter I."/>
            <person name="Kieber J.J."/>
        </authorList>
    </citation>
    <scope>NUCLEOTIDE SEQUENCE [MRNA]</scope>
    <scope>TISSUE SPECIFICITY</scope>
    <scope>INDUCTION</scope>
    <source>
        <strain>cv. Wassilewskija</strain>
    </source>
</reference>
<reference key="4">
    <citation type="journal article" date="2000" name="Nature">
        <title>Sequence and analysis of chromosome 3 of the plant Arabidopsis thaliana.</title>
        <authorList>
            <person name="Salanoubat M."/>
            <person name="Lemcke K."/>
            <person name="Rieger M."/>
            <person name="Ansorge W."/>
            <person name="Unseld M."/>
            <person name="Fartmann B."/>
            <person name="Valle G."/>
            <person name="Bloecker H."/>
            <person name="Perez-Alonso M."/>
            <person name="Obermaier B."/>
            <person name="Delseny M."/>
            <person name="Boutry M."/>
            <person name="Grivell L.A."/>
            <person name="Mache R."/>
            <person name="Puigdomenech P."/>
            <person name="De Simone V."/>
            <person name="Choisne N."/>
            <person name="Artiguenave F."/>
            <person name="Robert C."/>
            <person name="Brottier P."/>
            <person name="Wincker P."/>
            <person name="Cattolico L."/>
            <person name="Weissenbach J."/>
            <person name="Saurin W."/>
            <person name="Quetier F."/>
            <person name="Schaefer M."/>
            <person name="Mueller-Auer S."/>
            <person name="Gabel C."/>
            <person name="Fuchs M."/>
            <person name="Benes V."/>
            <person name="Wurmbach E."/>
            <person name="Drzonek H."/>
            <person name="Erfle H."/>
            <person name="Jordan N."/>
            <person name="Bangert S."/>
            <person name="Wiedelmann R."/>
            <person name="Kranz H."/>
            <person name="Voss H."/>
            <person name="Holland R."/>
            <person name="Brandt P."/>
            <person name="Nyakatura G."/>
            <person name="Vezzi A."/>
            <person name="D'Angelo M."/>
            <person name="Pallavicini A."/>
            <person name="Toppo S."/>
            <person name="Simionati B."/>
            <person name="Conrad A."/>
            <person name="Hornischer K."/>
            <person name="Kauer G."/>
            <person name="Loehnert T.-H."/>
            <person name="Nordsiek G."/>
            <person name="Reichelt J."/>
            <person name="Scharfe M."/>
            <person name="Schoen O."/>
            <person name="Bargues M."/>
            <person name="Terol J."/>
            <person name="Climent J."/>
            <person name="Navarro P."/>
            <person name="Collado C."/>
            <person name="Perez-Perez A."/>
            <person name="Ottenwaelder B."/>
            <person name="Duchemin D."/>
            <person name="Cooke R."/>
            <person name="Laudie M."/>
            <person name="Berger-Llauro C."/>
            <person name="Purnelle B."/>
            <person name="Masuy D."/>
            <person name="de Haan M."/>
            <person name="Maarse A.C."/>
            <person name="Alcaraz J.-P."/>
            <person name="Cottet A."/>
            <person name="Casacuberta E."/>
            <person name="Monfort A."/>
            <person name="Argiriou A."/>
            <person name="Flores M."/>
            <person name="Liguori R."/>
            <person name="Vitale D."/>
            <person name="Mannhaupt G."/>
            <person name="Haase D."/>
            <person name="Schoof H."/>
            <person name="Rudd S."/>
            <person name="Zaccaria P."/>
            <person name="Mewes H.-W."/>
            <person name="Mayer K.F.X."/>
            <person name="Kaul S."/>
            <person name="Town C.D."/>
            <person name="Koo H.L."/>
            <person name="Tallon L.J."/>
            <person name="Jenkins J."/>
            <person name="Rooney T."/>
            <person name="Rizzo M."/>
            <person name="Walts A."/>
            <person name="Utterback T."/>
            <person name="Fujii C.Y."/>
            <person name="Shea T.P."/>
            <person name="Creasy T.H."/>
            <person name="Haas B."/>
            <person name="Maiti R."/>
            <person name="Wu D."/>
            <person name="Peterson J."/>
            <person name="Van Aken S."/>
            <person name="Pai G."/>
            <person name="Militscher J."/>
            <person name="Sellers P."/>
            <person name="Gill J.E."/>
            <person name="Feldblyum T.V."/>
            <person name="Preuss D."/>
            <person name="Lin X."/>
            <person name="Nierman W.C."/>
            <person name="Salzberg S.L."/>
            <person name="White O."/>
            <person name="Venter J.C."/>
            <person name="Fraser C.M."/>
            <person name="Kaneko T."/>
            <person name="Nakamura Y."/>
            <person name="Sato S."/>
            <person name="Kato T."/>
            <person name="Asamizu E."/>
            <person name="Sasamoto S."/>
            <person name="Kimura T."/>
            <person name="Idesawa K."/>
            <person name="Kawashima K."/>
            <person name="Kishida Y."/>
            <person name="Kiyokawa C."/>
            <person name="Kohara M."/>
            <person name="Matsumoto M."/>
            <person name="Matsuno A."/>
            <person name="Muraki A."/>
            <person name="Nakayama S."/>
            <person name="Nakazaki N."/>
            <person name="Shinpo S."/>
            <person name="Takeuchi C."/>
            <person name="Wada T."/>
            <person name="Watanabe A."/>
            <person name="Yamada M."/>
            <person name="Yasuda M."/>
            <person name="Tabata S."/>
        </authorList>
    </citation>
    <scope>NUCLEOTIDE SEQUENCE [LARGE SCALE GENOMIC DNA]</scope>
    <source>
        <strain>cv. Columbia</strain>
    </source>
</reference>
<reference key="5">
    <citation type="journal article" date="2017" name="Plant J.">
        <title>Araport11: a complete reannotation of the Arabidopsis thaliana reference genome.</title>
        <authorList>
            <person name="Cheng C.Y."/>
            <person name="Krishnakumar V."/>
            <person name="Chan A.P."/>
            <person name="Thibaud-Nissen F."/>
            <person name="Schobel S."/>
            <person name="Town C.D."/>
        </authorList>
    </citation>
    <scope>GENOME REANNOTATION</scope>
    <source>
        <strain>cv. Columbia</strain>
    </source>
</reference>
<reference key="6">
    <citation type="journal article" date="2003" name="Science">
        <title>Empirical analysis of transcriptional activity in the Arabidopsis genome.</title>
        <authorList>
            <person name="Yamada K."/>
            <person name="Lim J."/>
            <person name="Dale J.M."/>
            <person name="Chen H."/>
            <person name="Shinn P."/>
            <person name="Palm C.J."/>
            <person name="Southwick A.M."/>
            <person name="Wu H.C."/>
            <person name="Kim C.J."/>
            <person name="Nguyen M."/>
            <person name="Pham P.K."/>
            <person name="Cheuk R.F."/>
            <person name="Karlin-Newmann G."/>
            <person name="Liu S.X."/>
            <person name="Lam B."/>
            <person name="Sakano H."/>
            <person name="Wu T."/>
            <person name="Yu G."/>
            <person name="Miranda M."/>
            <person name="Quach H.L."/>
            <person name="Tripp M."/>
            <person name="Chang C.H."/>
            <person name="Lee J.M."/>
            <person name="Toriumi M.J."/>
            <person name="Chan M.M."/>
            <person name="Tang C.C."/>
            <person name="Onodera C.S."/>
            <person name="Deng J.M."/>
            <person name="Akiyama K."/>
            <person name="Ansari Y."/>
            <person name="Arakawa T."/>
            <person name="Banh J."/>
            <person name="Banno F."/>
            <person name="Bowser L."/>
            <person name="Brooks S.Y."/>
            <person name="Carninci P."/>
            <person name="Chao Q."/>
            <person name="Choy N."/>
            <person name="Enju A."/>
            <person name="Goldsmith A.D."/>
            <person name="Gurjal M."/>
            <person name="Hansen N.F."/>
            <person name="Hayashizaki Y."/>
            <person name="Johnson-Hopson C."/>
            <person name="Hsuan V.W."/>
            <person name="Iida K."/>
            <person name="Karnes M."/>
            <person name="Khan S."/>
            <person name="Koesema E."/>
            <person name="Ishida J."/>
            <person name="Jiang P.X."/>
            <person name="Jones T."/>
            <person name="Kawai J."/>
            <person name="Kamiya A."/>
            <person name="Meyers C."/>
            <person name="Nakajima M."/>
            <person name="Narusaka M."/>
            <person name="Seki M."/>
            <person name="Sakurai T."/>
            <person name="Satou M."/>
            <person name="Tamse R."/>
            <person name="Vaysberg M."/>
            <person name="Wallender E.K."/>
            <person name="Wong C."/>
            <person name="Yamamura Y."/>
            <person name="Yuan S."/>
            <person name="Shinozaki K."/>
            <person name="Davis R.W."/>
            <person name="Theologis A."/>
            <person name="Ecker J.R."/>
        </authorList>
    </citation>
    <scope>NUCLEOTIDE SEQUENCE [LARGE SCALE MRNA]</scope>
    <source>
        <strain>cv. Columbia</strain>
    </source>
</reference>
<reference key="7">
    <citation type="journal article" date="1998" name="FEBS Lett.">
        <title>Expression of Arabidopsis response regulator homologs is induced by cytokinins and nitrate.</title>
        <authorList>
            <person name="Taniguchi M."/>
            <person name="Kiba T."/>
            <person name="Sakakibara H."/>
            <person name="Ueguchi C."/>
            <person name="Mizuno T."/>
            <person name="Sugiyama T."/>
        </authorList>
    </citation>
    <scope>INDUCTION</scope>
</reference>
<reference key="8">
    <citation type="journal article" date="2000" name="Plant Physiol.">
        <title>Characterization of the response of the Arabidopsis response regulator gene family to cytokinin.</title>
        <authorList>
            <person name="D'Agostino I.B."/>
            <person name="Deruere J."/>
            <person name="Kieber J.J."/>
        </authorList>
    </citation>
    <scope>TISSUE SPECIFICITY</scope>
    <scope>INDUCTION</scope>
</reference>
<reference key="9">
    <citation type="journal article" date="2004" name="Plant Cell">
        <title>Type-A Arabidopsis response regulators are partially redundant negative regulators of cytokinin signaling.</title>
        <authorList>
            <person name="To J.P.C."/>
            <person name="Haberer G."/>
            <person name="Ferreira F.J."/>
            <person name="Deruere J."/>
            <person name="Mason M.G."/>
            <person name="Schaller G.E."/>
            <person name="Alonso J.M."/>
            <person name="Ecker J.R."/>
            <person name="Kieber J.J."/>
        </authorList>
    </citation>
    <scope>FUNCTION</scope>
</reference>
<name>ARR5_ARATH</name>